<reference key="1">
    <citation type="journal article" date="1987" name="Nucleic Acids Res.">
        <title>Shufflon: multi-inversion of four contiguous DNA segments of plasmid R64 creates seven different open reading frames.</title>
        <authorList>
            <person name="Komano T."/>
            <person name="Kubo A."/>
            <person name="Nisioka T."/>
        </authorList>
    </citation>
    <scope>NUCLEOTIDE SEQUENCE [GENOMIC DNA]</scope>
    <source>
        <plasmid>IncI1 R64</plasmid>
    </source>
</reference>
<reference key="2">
    <citation type="journal article" date="1989" name="Plasmid">
        <title>Cloning and nucleotide sequence of the ColIb shufflon.</title>
        <authorList>
            <person name="Kim S.-R."/>
            <person name="Komano T."/>
        </authorList>
    </citation>
    <scope>NUCLEOTIDE SEQUENCE [GENOMIC DNA] OF 362-433</scope>
    <source>
        <plasmid>IncI1 ColIb-P9</plasmid>
    </source>
</reference>
<proteinExistence type="predicted"/>
<geneLocation type="plasmid">
    <name>IncI1 R64</name>
</geneLocation>
<geneLocation type="plasmid">
    <name>IncI1 ColIb-P9</name>
</geneLocation>
<keyword id="KW-0614">Plasmid</keyword>
<feature type="chain" id="PRO_0000097747" description="Shufflon protein C'">
    <location>
        <begin position="1"/>
        <end position="433"/>
    </location>
</feature>
<feature type="region of interest" description="Constant region">
    <location>
        <begin position="1"/>
        <end position="361"/>
    </location>
</feature>
<feature type="region of interest" description="Variable region">
    <location>
        <begin position="362"/>
        <end position="433"/>
    </location>
</feature>
<organism>
    <name type="scientific">Escherichia coli</name>
    <dbReference type="NCBI Taxonomy" id="562"/>
    <lineage>
        <taxon>Bacteria</taxon>
        <taxon>Pseudomonadati</taxon>
        <taxon>Pseudomonadota</taxon>
        <taxon>Gammaproteobacteria</taxon>
        <taxon>Enterobacterales</taxon>
        <taxon>Enterobacteriaceae</taxon>
        <taxon>Escherichia</taxon>
    </lineage>
</organism>
<sequence>MKKYDRGWASLETGAALLIVMLLIAWGAGIWQDYIQTKGWQTEARLVSNWTSAARSYIGKNYTTLQGSSTTTTPAVITTTMLKNTGFLSSGFTETNSEGQRLQAYVVRNAQNPELLQAMVVSSGGTPYPVKALIQMAKDITTGLGGYIQDGKTATGALRSWSVALSNYGAKSGNGHIAVLLSTDELSGAAEDTDRLYRFQVNGRPDLNKMHTAIDMGSNNLNNVGAVNAQTGNFSGNVNGVNGTFSGQVKGNSGNFDVNVTAGGDIRSNNGWLITRNSKGWLNETHGGGFYMSDGSWVRSVNNKGIYTGGQVKGGTVRADGRLYTGEYLQLERTAVAGASCSPNGLVGRDNTGAILSCQSGRWSGGNKINYSACNWYKSSVAMNHFIGGKSGGSIYYKPIQCPTGYIMTGTRMYGIGDGVDEEHVDAYCCPFN</sequence>
<dbReference type="EMBL" id="AB027308">
    <property type="protein sequence ID" value="BAA77986.1"/>
    <property type="molecule type" value="Genomic_DNA"/>
</dbReference>
<dbReference type="EMBL" id="D90039">
    <property type="protein sequence ID" value="BAA14090.1"/>
    <property type="molecule type" value="Genomic_DNA"/>
</dbReference>
<dbReference type="PIR" id="F26421">
    <property type="entry name" value="F26421"/>
</dbReference>
<dbReference type="RefSeq" id="WP_001499587.1">
    <property type="nucleotide sequence ID" value="NZ_VNJE01000018.1"/>
</dbReference>
<dbReference type="InterPro" id="IPR029017">
    <property type="entry name" value="Enolase-like_N"/>
</dbReference>
<dbReference type="InterPro" id="IPR007001">
    <property type="entry name" value="Shufflon_N"/>
</dbReference>
<dbReference type="Pfam" id="PF04917">
    <property type="entry name" value="Shufflon_N"/>
    <property type="match status" value="1"/>
</dbReference>
<dbReference type="SUPFAM" id="SSF54826">
    <property type="entry name" value="Enolase N-terminal domain-like"/>
    <property type="match status" value="1"/>
</dbReference>
<comment type="miscellaneous">
    <text>This protein is expressed by a shufflon (= clustered inversion region that works as a biological switch). The orfs of this region share a constant N-terminus, while the C-terminus is variable.</text>
</comment>
<name>SHU6_ECOLX</name>
<accession>P09750</accession>
<protein>
    <recommendedName>
        <fullName>Shufflon protein C'</fullName>
    </recommendedName>
</protein>